<protein>
    <recommendedName>
        <fullName evidence="1">Cytochrome b6-f complex subunit 5</fullName>
    </recommendedName>
    <alternativeName>
        <fullName evidence="1">Cytochrome b6-f complex subunit PetG</fullName>
    </alternativeName>
    <alternativeName>
        <fullName evidence="1">Cytochrome b6-f complex subunit V</fullName>
    </alternativeName>
</protein>
<proteinExistence type="inferred from homology"/>
<name>PETG_PLAOC</name>
<feature type="chain" id="PRO_0000355409" description="Cytochrome b6-f complex subunit 5">
    <location>
        <begin position="1"/>
        <end position="37"/>
    </location>
</feature>
<feature type="transmembrane region" description="Helical" evidence="1">
    <location>
        <begin position="5"/>
        <end position="25"/>
    </location>
</feature>
<reference key="1">
    <citation type="journal article" date="2006" name="BMC Plant Biol.">
        <title>Rapid and accurate pyrosequencing of angiosperm plastid genomes.</title>
        <authorList>
            <person name="Moore M.J."/>
            <person name="Dhingra A."/>
            <person name="Soltis P.S."/>
            <person name="Shaw R."/>
            <person name="Farmerie W.G."/>
            <person name="Folta K.M."/>
            <person name="Soltis D.E."/>
        </authorList>
    </citation>
    <scope>NUCLEOTIDE SEQUENCE [LARGE SCALE GENOMIC DNA]</scope>
</reference>
<keyword id="KW-0150">Chloroplast</keyword>
<keyword id="KW-0249">Electron transport</keyword>
<keyword id="KW-0472">Membrane</keyword>
<keyword id="KW-0602">Photosynthesis</keyword>
<keyword id="KW-0934">Plastid</keyword>
<keyword id="KW-0793">Thylakoid</keyword>
<keyword id="KW-0812">Transmembrane</keyword>
<keyword id="KW-1133">Transmembrane helix</keyword>
<keyword id="KW-0813">Transport</keyword>
<sequence length="37" mass="4156">MVEVFLFGIVLGLIPITLAGLFVTAYLQYRRGDQLDL</sequence>
<geneLocation type="chloroplast"/>
<dbReference type="EMBL" id="DQ923116">
    <property type="protein sequence ID" value="ABI49797.1"/>
    <property type="molecule type" value="Genomic_DNA"/>
</dbReference>
<dbReference type="RefSeq" id="YP_740584.1">
    <property type="nucleotide sequence ID" value="NC_008335.1"/>
</dbReference>
<dbReference type="SMR" id="Q09G27"/>
<dbReference type="GeneID" id="4271309"/>
<dbReference type="GO" id="GO:0009535">
    <property type="term" value="C:chloroplast thylakoid membrane"/>
    <property type="evidence" value="ECO:0007669"/>
    <property type="project" value="UniProtKB-SubCell"/>
</dbReference>
<dbReference type="GO" id="GO:0009512">
    <property type="term" value="C:cytochrome b6f complex"/>
    <property type="evidence" value="ECO:0007669"/>
    <property type="project" value="InterPro"/>
</dbReference>
<dbReference type="GO" id="GO:0045158">
    <property type="term" value="F:electron transporter, transferring electrons within cytochrome b6/f complex of photosystem II activity"/>
    <property type="evidence" value="ECO:0007669"/>
    <property type="project" value="UniProtKB-UniRule"/>
</dbReference>
<dbReference type="GO" id="GO:0017004">
    <property type="term" value="P:cytochrome complex assembly"/>
    <property type="evidence" value="ECO:0007669"/>
    <property type="project" value="UniProtKB-UniRule"/>
</dbReference>
<dbReference type="GO" id="GO:0015979">
    <property type="term" value="P:photosynthesis"/>
    <property type="evidence" value="ECO:0007669"/>
    <property type="project" value="UniProtKB-KW"/>
</dbReference>
<dbReference type="HAMAP" id="MF_00432">
    <property type="entry name" value="Cytb6_f_PetG"/>
    <property type="match status" value="1"/>
</dbReference>
<dbReference type="InterPro" id="IPR003683">
    <property type="entry name" value="Cyt_6/f_cplx_su5"/>
</dbReference>
<dbReference type="InterPro" id="IPR036099">
    <property type="entry name" value="Cyt_6/f_cplx_su5_sf"/>
</dbReference>
<dbReference type="NCBIfam" id="NF001907">
    <property type="entry name" value="PRK00665.1"/>
    <property type="match status" value="1"/>
</dbReference>
<dbReference type="Pfam" id="PF02529">
    <property type="entry name" value="PetG"/>
    <property type="match status" value="1"/>
</dbReference>
<dbReference type="PIRSF" id="PIRSF000034">
    <property type="entry name" value="Cyt_b6-f_V"/>
    <property type="match status" value="1"/>
</dbReference>
<dbReference type="SUPFAM" id="SSF103446">
    <property type="entry name" value="PetG subunit of the cytochrome b6f complex"/>
    <property type="match status" value="1"/>
</dbReference>
<evidence type="ECO:0000255" key="1">
    <source>
        <dbReference type="HAMAP-Rule" id="MF_00432"/>
    </source>
</evidence>
<organism>
    <name type="scientific">Platanus occidentalis</name>
    <name type="common">Sycamore</name>
    <name type="synonym">American plane tree</name>
    <dbReference type="NCBI Taxonomy" id="4403"/>
    <lineage>
        <taxon>Eukaryota</taxon>
        <taxon>Viridiplantae</taxon>
        <taxon>Streptophyta</taxon>
        <taxon>Embryophyta</taxon>
        <taxon>Tracheophyta</taxon>
        <taxon>Spermatophyta</taxon>
        <taxon>Magnoliopsida</taxon>
        <taxon>Proteales</taxon>
        <taxon>Platanaceae</taxon>
        <taxon>Platanus</taxon>
    </lineage>
</organism>
<comment type="function">
    <text evidence="1">Component of the cytochrome b6-f complex, which mediates electron transfer between photosystem II (PSII) and photosystem I (PSI), cyclic electron flow around PSI, and state transitions. PetG is required for either the stability or assembly of the cytochrome b6-f complex.</text>
</comment>
<comment type="subunit">
    <text evidence="1">The 4 large subunits of the cytochrome b6-f complex are cytochrome b6, subunit IV (17 kDa polypeptide, PetD), cytochrome f and the Rieske protein, while the 4 small subunits are PetG, PetL, PetM and PetN. The complex functions as a dimer.</text>
</comment>
<comment type="subcellular location">
    <subcellularLocation>
        <location evidence="1">Plastid</location>
        <location evidence="1">Chloroplast thylakoid membrane</location>
        <topology evidence="1">Single-pass membrane protein</topology>
    </subcellularLocation>
</comment>
<comment type="similarity">
    <text evidence="1">Belongs to the PetG family.</text>
</comment>
<gene>
    <name evidence="1" type="primary">petG</name>
</gene>
<accession>Q09G27</accession>